<comment type="function">
    <text evidence="2 3">Binds the chemical odorant, 2-isobutyl-3-methoxypyrazine.</text>
</comment>
<comment type="subunit">
    <text evidence="2 3">Homodimer.</text>
</comment>
<comment type="PTM">
    <text evidence="3">The N-terminus is blocked.</text>
</comment>
<comment type="similarity">
    <text evidence="1">Belongs to the calycin superfamily. Lipocalin family.</text>
</comment>
<evidence type="ECO:0000255" key="1"/>
<evidence type="ECO:0000269" key="2">
    <source>
    </source>
</evidence>
<evidence type="ECO:0000269" key="3">
    <source>
    </source>
</evidence>
<evidence type="ECO:0000303" key="4">
    <source>
    </source>
</evidence>
<evidence type="ECO:0000305" key="5"/>
<keyword id="KW-0903">Direct protein sequencing</keyword>
<keyword id="KW-0552">Olfaction</keyword>
<keyword id="KW-1185">Reference proteome</keyword>
<keyword id="KW-0716">Sensory transduction</keyword>
<keyword id="KW-0813">Transport</keyword>
<reference evidence="5" key="1">
    <citation type="journal article" date="1997" name="Chem. Senses">
        <title>Three odorant-binding proteins from rabbit nasal mucosa.</title>
        <authorList>
            <person name="Garibotti M."/>
            <person name="Navarrini A."/>
            <person name="Pisanelli A.M."/>
            <person name="Pelosi P."/>
        </authorList>
    </citation>
    <scope>PROTEIN SEQUENCE</scope>
    <scope>FUNCTION</scope>
    <scope>SUBUNIT</scope>
    <scope>BLOCKAGE OF N-TERMINUS</scope>
    <source>
        <tissue evidence="3">Nasal mucosa</tissue>
    </source>
</reference>
<reference evidence="5" key="2">
    <citation type="journal article" date="1991" name="Comp. Biochem. Physiol.">
        <title>Purification and characterization of two odorant-binding proteins from nasal tissue of rabbit and pig.</title>
        <authorList>
            <person name="Dal Monte M."/>
            <person name="Andreini I."/>
            <person name="Revoltella R."/>
            <person name="Pelosi P."/>
        </authorList>
    </citation>
    <scope>FUNCTION</scope>
    <scope>SUBUNIT</scope>
    <source>
        <tissue evidence="2">Nasal mucosa</tissue>
    </source>
</reference>
<proteinExistence type="evidence at protein level"/>
<protein>
    <recommendedName>
        <fullName>Odorant-binding protein 1</fullName>
    </recommendedName>
    <alternativeName>
        <fullName evidence="4">Odorant-binding protein I</fullName>
        <shortName evidence="4">OBP-I</shortName>
    </alternativeName>
</protein>
<accession>C0HJA7</accession>
<feature type="peptide" id="PRO_0000421856" description="Odorant-binding protein 1" evidence="3">
    <location>
        <begin position="1" status="less than"/>
        <end position="22" status="greater than"/>
    </location>
</feature>
<feature type="non-terminal residue" evidence="4">
    <location>
        <position position="1"/>
    </location>
</feature>
<feature type="non-terminal residue" evidence="4">
    <location>
        <position position="22"/>
    </location>
</feature>
<sequence>EQLIELVGPWKTVYIVHFNGET</sequence>
<name>OBP1_RABIT</name>
<dbReference type="InParanoid" id="C0HJA7"/>
<dbReference type="Proteomes" id="UP000001811">
    <property type="component" value="Unplaced"/>
</dbReference>
<dbReference type="GO" id="GO:0007608">
    <property type="term" value="P:sensory perception of smell"/>
    <property type="evidence" value="ECO:0007669"/>
    <property type="project" value="UniProtKB-KW"/>
</dbReference>
<organism>
    <name type="scientific">Oryctolagus cuniculus</name>
    <name type="common">Rabbit</name>
    <dbReference type="NCBI Taxonomy" id="9986"/>
    <lineage>
        <taxon>Eukaryota</taxon>
        <taxon>Metazoa</taxon>
        <taxon>Chordata</taxon>
        <taxon>Craniata</taxon>
        <taxon>Vertebrata</taxon>
        <taxon>Euteleostomi</taxon>
        <taxon>Mammalia</taxon>
        <taxon>Eutheria</taxon>
        <taxon>Euarchontoglires</taxon>
        <taxon>Glires</taxon>
        <taxon>Lagomorpha</taxon>
        <taxon>Leporidae</taxon>
        <taxon>Oryctolagus</taxon>
    </lineage>
</organism>